<comment type="function">
    <text evidence="1">Catalyzes the formation of acetyl phosphate from acetate and ATP. Can also catalyze the reverse reaction.</text>
</comment>
<comment type="catalytic activity">
    <reaction evidence="1">
        <text>acetate + ATP = acetyl phosphate + ADP</text>
        <dbReference type="Rhea" id="RHEA:11352"/>
        <dbReference type="ChEBI" id="CHEBI:22191"/>
        <dbReference type="ChEBI" id="CHEBI:30089"/>
        <dbReference type="ChEBI" id="CHEBI:30616"/>
        <dbReference type="ChEBI" id="CHEBI:456216"/>
        <dbReference type="EC" id="2.7.2.1"/>
    </reaction>
</comment>
<comment type="cofactor">
    <cofactor evidence="1">
        <name>Mg(2+)</name>
        <dbReference type="ChEBI" id="CHEBI:18420"/>
    </cofactor>
    <cofactor evidence="1">
        <name>Mn(2+)</name>
        <dbReference type="ChEBI" id="CHEBI:29035"/>
    </cofactor>
    <text evidence="1">Mg(2+). Can also accept Mn(2+).</text>
</comment>
<comment type="pathway">
    <text evidence="1">Metabolic intermediate biosynthesis; acetyl-CoA biosynthesis; acetyl-CoA from acetate: step 1/2.</text>
</comment>
<comment type="subunit">
    <text evidence="1">Homodimer.</text>
</comment>
<comment type="subcellular location">
    <subcellularLocation>
        <location evidence="1">Cytoplasm</location>
    </subcellularLocation>
</comment>
<comment type="similarity">
    <text evidence="1">Belongs to the acetokinase family.</text>
</comment>
<dbReference type="EC" id="2.7.2.1" evidence="1"/>
<dbReference type="EMBL" id="L43967">
    <property type="protein sequence ID" value="AAC71582.1"/>
    <property type="molecule type" value="Genomic_DNA"/>
</dbReference>
<dbReference type="EMBL" id="X61531">
    <property type="protein sequence ID" value="CAA43743.1"/>
    <property type="molecule type" value="Genomic_DNA"/>
</dbReference>
<dbReference type="PIR" id="E64239">
    <property type="entry name" value="E64239"/>
</dbReference>
<dbReference type="RefSeq" id="WP_009885814.1">
    <property type="nucleotide sequence ID" value="NC_000908.2"/>
</dbReference>
<dbReference type="SMR" id="P47599"/>
<dbReference type="FunCoup" id="P47599">
    <property type="interactions" value="143"/>
</dbReference>
<dbReference type="STRING" id="243273.MG_357"/>
<dbReference type="GeneID" id="88282538"/>
<dbReference type="KEGG" id="mge:MG_357"/>
<dbReference type="eggNOG" id="COG0282">
    <property type="taxonomic scope" value="Bacteria"/>
</dbReference>
<dbReference type="HOGENOM" id="CLU_020352_0_0_14"/>
<dbReference type="InParanoid" id="P47599"/>
<dbReference type="OrthoDB" id="9802453at2"/>
<dbReference type="BioCyc" id="MGEN243273:G1GJ2-448-MONOMER"/>
<dbReference type="UniPathway" id="UPA00340">
    <property type="reaction ID" value="UER00458"/>
</dbReference>
<dbReference type="Proteomes" id="UP000000807">
    <property type="component" value="Chromosome"/>
</dbReference>
<dbReference type="GO" id="GO:0005737">
    <property type="term" value="C:cytoplasm"/>
    <property type="evidence" value="ECO:0007669"/>
    <property type="project" value="UniProtKB-SubCell"/>
</dbReference>
<dbReference type="GO" id="GO:0008776">
    <property type="term" value="F:acetate kinase activity"/>
    <property type="evidence" value="ECO:0000318"/>
    <property type="project" value="GO_Central"/>
</dbReference>
<dbReference type="GO" id="GO:0005524">
    <property type="term" value="F:ATP binding"/>
    <property type="evidence" value="ECO:0007669"/>
    <property type="project" value="UniProtKB-KW"/>
</dbReference>
<dbReference type="GO" id="GO:0000287">
    <property type="term" value="F:magnesium ion binding"/>
    <property type="evidence" value="ECO:0007669"/>
    <property type="project" value="UniProtKB-UniRule"/>
</dbReference>
<dbReference type="GO" id="GO:0006083">
    <property type="term" value="P:acetate metabolic process"/>
    <property type="evidence" value="ECO:0000318"/>
    <property type="project" value="GO_Central"/>
</dbReference>
<dbReference type="GO" id="GO:0006085">
    <property type="term" value="P:acetyl-CoA biosynthetic process"/>
    <property type="evidence" value="ECO:0007669"/>
    <property type="project" value="UniProtKB-UniRule"/>
</dbReference>
<dbReference type="Gene3D" id="3.30.420.40">
    <property type="match status" value="2"/>
</dbReference>
<dbReference type="HAMAP" id="MF_00020">
    <property type="entry name" value="Acetate_kinase"/>
    <property type="match status" value="1"/>
</dbReference>
<dbReference type="InterPro" id="IPR004372">
    <property type="entry name" value="Ac/propionate_kinase"/>
</dbReference>
<dbReference type="InterPro" id="IPR000890">
    <property type="entry name" value="Aliphatic_acid_kin_short-chain"/>
</dbReference>
<dbReference type="InterPro" id="IPR023865">
    <property type="entry name" value="Aliphatic_acid_kinase_CS"/>
</dbReference>
<dbReference type="InterPro" id="IPR043129">
    <property type="entry name" value="ATPase_NBD"/>
</dbReference>
<dbReference type="NCBIfam" id="TIGR00016">
    <property type="entry name" value="ackA"/>
    <property type="match status" value="1"/>
</dbReference>
<dbReference type="PANTHER" id="PTHR21060">
    <property type="entry name" value="ACETATE KINASE"/>
    <property type="match status" value="1"/>
</dbReference>
<dbReference type="PANTHER" id="PTHR21060:SF15">
    <property type="entry name" value="ACETATE KINASE-RELATED"/>
    <property type="match status" value="1"/>
</dbReference>
<dbReference type="Pfam" id="PF00871">
    <property type="entry name" value="Acetate_kinase"/>
    <property type="match status" value="1"/>
</dbReference>
<dbReference type="PIRSF" id="PIRSF000722">
    <property type="entry name" value="Acetate_prop_kin"/>
    <property type="match status" value="1"/>
</dbReference>
<dbReference type="PRINTS" id="PR00471">
    <property type="entry name" value="ACETATEKNASE"/>
</dbReference>
<dbReference type="SUPFAM" id="SSF53067">
    <property type="entry name" value="Actin-like ATPase domain"/>
    <property type="match status" value="2"/>
</dbReference>
<dbReference type="PROSITE" id="PS01075">
    <property type="entry name" value="ACETATE_KINASE_1"/>
    <property type="match status" value="1"/>
</dbReference>
<dbReference type="PROSITE" id="PS01076">
    <property type="entry name" value="ACETATE_KINASE_2"/>
    <property type="match status" value="1"/>
</dbReference>
<reference key="1">
    <citation type="journal article" date="1995" name="Science">
        <title>The minimal gene complement of Mycoplasma genitalium.</title>
        <authorList>
            <person name="Fraser C.M."/>
            <person name="Gocayne J.D."/>
            <person name="White O."/>
            <person name="Adams M.D."/>
            <person name="Clayton R.A."/>
            <person name="Fleischmann R.D."/>
            <person name="Bult C.J."/>
            <person name="Kerlavage A.R."/>
            <person name="Sutton G.G."/>
            <person name="Kelley J.M."/>
            <person name="Fritchman J.L."/>
            <person name="Weidman J.F."/>
            <person name="Small K.V."/>
            <person name="Sandusky M."/>
            <person name="Fuhrmann J.L."/>
            <person name="Nguyen D.T."/>
            <person name="Utterback T.R."/>
            <person name="Saudek D.M."/>
            <person name="Phillips C.A."/>
            <person name="Merrick J.M."/>
            <person name="Tomb J.-F."/>
            <person name="Dougherty B.A."/>
            <person name="Bott K.F."/>
            <person name="Hu P.-C."/>
            <person name="Lucier T.S."/>
            <person name="Peterson S.N."/>
            <person name="Smith H.O."/>
            <person name="Hutchison C.A. III"/>
            <person name="Venter J.C."/>
        </authorList>
    </citation>
    <scope>NUCLEOTIDE SEQUENCE [LARGE SCALE GENOMIC DNA]</scope>
    <source>
        <strain>ATCC 33530 / DSM 19775 / NCTC 10195 / G37</strain>
    </source>
</reference>
<reference key="2">
    <citation type="journal article" date="1991" name="Nucleic Acids Res.">
        <title>A random sequencing approach for placing markers on the physical map of Mycoplasma genitalium.</title>
        <authorList>
            <person name="Peterson S.N."/>
            <person name="Schramm N."/>
            <person name="Hu P.-C."/>
            <person name="Bott K.F."/>
            <person name="Hutchison C.A. III"/>
        </authorList>
    </citation>
    <scope>NUCLEOTIDE SEQUENCE [GENOMIC DNA] OF 48-114</scope>
    <source>
        <strain>ATCC 33530 / DSM 19775 / NCTC 10195 / G37</strain>
    </source>
</reference>
<name>ACKA_MYCGE</name>
<proteinExistence type="inferred from homology"/>
<organism>
    <name type="scientific">Mycoplasma genitalium (strain ATCC 33530 / DSM 19775 / NCTC 10195 / G37)</name>
    <name type="common">Mycoplasmoides genitalium</name>
    <dbReference type="NCBI Taxonomy" id="243273"/>
    <lineage>
        <taxon>Bacteria</taxon>
        <taxon>Bacillati</taxon>
        <taxon>Mycoplasmatota</taxon>
        <taxon>Mycoplasmoidales</taxon>
        <taxon>Mycoplasmoidaceae</taxon>
        <taxon>Mycoplasmoides</taxon>
    </lineage>
</organism>
<sequence length="393" mass="44346">MQSHKILVVNAGSSSIKFQLFNDKKQVLAKGLCERIFIDGFFKLEFNQKKIEEKVQFNDHNLAVKHFLNALKKNKIITELSEIGLIGHRVVQGANYFTDAVLVDTHSLAKIKEFIKLAPLHNKPEADVIEIFLKEIKTAKNVAVFDTTFHTTIPRENYLYAVPENWEKNNLVRRYGFHGTSYKYINEFLEKKFNKKPLNLIVCHLGNGASVCAIKQGKSLNTSMGFTPLEGLIMGTRSGDIDPAIVSYIAEQQKLSCNDVVNELNKKSGMFAITGSSDMRDIFDKPEINDIAIKMYVNRVADYIAKYLNQLSGEIDSLVFTGGVGENASYCVQLIIEKVASLGFKTNSNLFGNYQDSSLISTNESKYQIFRVRTNEELMIVEDALRVSTNIKK</sequence>
<protein>
    <recommendedName>
        <fullName evidence="1">Acetate kinase</fullName>
        <ecNumber evidence="1">2.7.2.1</ecNumber>
    </recommendedName>
    <alternativeName>
        <fullName evidence="1">Acetokinase</fullName>
    </alternativeName>
</protein>
<gene>
    <name evidence="1" type="primary">ackA</name>
    <name type="ordered locus">MG357</name>
</gene>
<accession>P47599</accession>
<accession>Q49485</accession>
<feature type="chain" id="PRO_0000107586" description="Acetate kinase">
    <location>
        <begin position="1"/>
        <end position="393"/>
    </location>
</feature>
<feature type="active site" description="Proton donor/acceptor" evidence="1">
    <location>
        <position position="146"/>
    </location>
</feature>
<feature type="binding site" evidence="1">
    <location>
        <position position="10"/>
    </location>
    <ligand>
        <name>Mg(2+)</name>
        <dbReference type="ChEBI" id="CHEBI:18420"/>
    </ligand>
</feature>
<feature type="binding site" evidence="1">
    <location>
        <position position="17"/>
    </location>
    <ligand>
        <name>ATP</name>
        <dbReference type="ChEBI" id="CHEBI:30616"/>
    </ligand>
</feature>
<feature type="binding site" evidence="1">
    <location>
        <position position="89"/>
    </location>
    <ligand>
        <name>substrate</name>
    </ligand>
</feature>
<feature type="binding site" evidence="1">
    <location>
        <begin position="204"/>
        <end position="208"/>
    </location>
    <ligand>
        <name>ATP</name>
        <dbReference type="ChEBI" id="CHEBI:30616"/>
    </ligand>
</feature>
<feature type="binding site" evidence="1">
    <location>
        <begin position="278"/>
        <end position="280"/>
    </location>
    <ligand>
        <name>ATP</name>
        <dbReference type="ChEBI" id="CHEBI:30616"/>
    </ligand>
</feature>
<feature type="binding site" evidence="1">
    <location>
        <begin position="323"/>
        <end position="327"/>
    </location>
    <ligand>
        <name>ATP</name>
        <dbReference type="ChEBI" id="CHEBI:30616"/>
    </ligand>
</feature>
<feature type="binding site" evidence="1">
    <location>
        <position position="376"/>
    </location>
    <ligand>
        <name>Mg(2+)</name>
        <dbReference type="ChEBI" id="CHEBI:18420"/>
    </ligand>
</feature>
<feature type="site" description="Transition state stabilizer" evidence="1">
    <location>
        <position position="178"/>
    </location>
</feature>
<feature type="site" description="Transition state stabilizer" evidence="1">
    <location>
        <position position="237"/>
    </location>
</feature>
<feature type="sequence conflict" description="In Ref. 2; CAA43743." evidence="2" ref="2">
    <original>Q</original>
    <variation>S</variation>
    <location>
        <position position="48"/>
    </location>
</feature>
<evidence type="ECO:0000255" key="1">
    <source>
        <dbReference type="HAMAP-Rule" id="MF_00020"/>
    </source>
</evidence>
<evidence type="ECO:0000305" key="2"/>
<keyword id="KW-0067">ATP-binding</keyword>
<keyword id="KW-0963">Cytoplasm</keyword>
<keyword id="KW-0418">Kinase</keyword>
<keyword id="KW-0460">Magnesium</keyword>
<keyword id="KW-0479">Metal-binding</keyword>
<keyword id="KW-0547">Nucleotide-binding</keyword>
<keyword id="KW-1185">Reference proteome</keyword>
<keyword id="KW-0808">Transferase</keyword>